<protein>
    <recommendedName>
        <fullName evidence="1">Elongation factor G 1</fullName>
        <shortName evidence="1">EF-G 1</shortName>
    </recommendedName>
</protein>
<comment type="function">
    <text evidence="1">Catalyzes the GTP-dependent ribosomal translocation step during translation elongation. During this step, the ribosome changes from the pre-translocational (PRE) to the post-translocational (POST) state as the newly formed A-site-bound peptidyl-tRNA and P-site-bound deacylated tRNA move to the P and E sites, respectively. Catalyzes the coordinated movement of the two tRNA molecules, the mRNA and conformational changes in the ribosome.</text>
</comment>
<comment type="subcellular location">
    <subcellularLocation>
        <location evidence="1">Cytoplasm</location>
    </subcellularLocation>
</comment>
<comment type="similarity">
    <text evidence="1">Belongs to the TRAFAC class translation factor GTPase superfamily. Classic translation factor GTPase family. EF-G/EF-2 subfamily.</text>
</comment>
<reference key="1">
    <citation type="journal article" date="2003" name="Lancet">
        <title>Genome sequence of Vibrio parahaemolyticus: a pathogenic mechanism distinct from that of V. cholerae.</title>
        <authorList>
            <person name="Makino K."/>
            <person name="Oshima K."/>
            <person name="Kurokawa K."/>
            <person name="Yokoyama K."/>
            <person name="Uda T."/>
            <person name="Tagomori K."/>
            <person name="Iijima Y."/>
            <person name="Najima M."/>
            <person name="Nakano M."/>
            <person name="Yamashita A."/>
            <person name="Kubota Y."/>
            <person name="Kimura S."/>
            <person name="Yasunaga T."/>
            <person name="Honda T."/>
            <person name="Shinagawa H."/>
            <person name="Hattori M."/>
            <person name="Iida T."/>
        </authorList>
    </citation>
    <scope>NUCLEOTIDE SEQUENCE [LARGE SCALE GENOMIC DNA]</scope>
    <source>
        <strain>RIMD 2210633</strain>
    </source>
</reference>
<feature type="chain" id="PRO_0000091261" description="Elongation factor G 1">
    <location>
        <begin position="1"/>
        <end position="699"/>
    </location>
</feature>
<feature type="domain" description="tr-type G">
    <location>
        <begin position="8"/>
        <end position="290"/>
    </location>
</feature>
<feature type="binding site" evidence="1">
    <location>
        <begin position="17"/>
        <end position="24"/>
    </location>
    <ligand>
        <name>GTP</name>
        <dbReference type="ChEBI" id="CHEBI:37565"/>
    </ligand>
</feature>
<feature type="binding site" evidence="1">
    <location>
        <begin position="88"/>
        <end position="92"/>
    </location>
    <ligand>
        <name>GTP</name>
        <dbReference type="ChEBI" id="CHEBI:37565"/>
    </ligand>
</feature>
<feature type="binding site" evidence="1">
    <location>
        <begin position="142"/>
        <end position="145"/>
    </location>
    <ligand>
        <name>GTP</name>
        <dbReference type="ChEBI" id="CHEBI:37565"/>
    </ligand>
</feature>
<accession>Q87L45</accession>
<name>EFG1_VIBPA</name>
<organism>
    <name type="scientific">Vibrio parahaemolyticus serotype O3:K6 (strain RIMD 2210633)</name>
    <dbReference type="NCBI Taxonomy" id="223926"/>
    <lineage>
        <taxon>Bacteria</taxon>
        <taxon>Pseudomonadati</taxon>
        <taxon>Pseudomonadota</taxon>
        <taxon>Gammaproteobacteria</taxon>
        <taxon>Vibrionales</taxon>
        <taxon>Vibrionaceae</taxon>
        <taxon>Vibrio</taxon>
    </lineage>
</organism>
<evidence type="ECO:0000255" key="1">
    <source>
        <dbReference type="HAMAP-Rule" id="MF_00054"/>
    </source>
</evidence>
<gene>
    <name evidence="1" type="primary">fusA1</name>
    <name type="ordered locus">VP2771</name>
</gene>
<sequence>MARKTPIEHYRNIGICAHVDAGKTTTTERILFYTGLSHKIGEVHDGAATMDWMEQEQERGITITSAATTTFWRGMEAQFPEHRVNIIDTPGHVDFTIEVERSLRVLDGAVVVFCGSSGVEPQSETVWRQADKYHVPRMVFVNKMDRAGADFLRVVDQIKNRLGANPVPIQLNVGAEEDFRGVIDLIKMKMINWNDADQGMSFTYEDIPADMIDLAEEWRNHMIESAAEASEELMDKYLEEGELTEAEIKQALRTRTLNNEIVLATCGSAFKNKGVQAVLDAVIEFLPSPSDVPAIKGVDEKDNEIERHADDNEPFSALAFKIATDPFVGTLTFMRVYSGVVNSGDAVYNSVKEKKERFGRIVQMHANKREEIKEVRAGDIAAAIGLKDVTTGDTLCDQSHKVILERMEFPEPVIQIAVEPRSKADQEKMGIALGKLAAEDPSFRVETDDETGQTLISGMGELHLDIIVDRMKREFSVDCNVGKPQVAYRETIRGKAEVEGKFVRQSGGRGQYGHVWVKLEPSEPGEGFVFVDEIVGGVIPKEYISSVAKGIEEQMNSGVLAGYPVLDIKATLFDGSYHDVDSSEMAFKIAGSMAFKKGALEAQPVILEPMMNVEVTTPEDWMGDVVGDLNRRRGMIEGMDEGVAGLKIIRAQVPLSEMFGYATDLRSATQGRASYSMEFNEYAEVPKNFADKIIAERGY</sequence>
<dbReference type="EMBL" id="BA000031">
    <property type="protein sequence ID" value="BAC61034.1"/>
    <property type="molecule type" value="Genomic_DNA"/>
</dbReference>
<dbReference type="RefSeq" id="NP_799150.1">
    <property type="nucleotide sequence ID" value="NC_004603.1"/>
</dbReference>
<dbReference type="SMR" id="Q87L45"/>
<dbReference type="GeneID" id="1190321"/>
<dbReference type="KEGG" id="vpa:VP2771"/>
<dbReference type="PATRIC" id="fig|223926.6.peg.2667"/>
<dbReference type="eggNOG" id="COG0480">
    <property type="taxonomic scope" value="Bacteria"/>
</dbReference>
<dbReference type="HOGENOM" id="CLU_002794_4_1_6"/>
<dbReference type="Proteomes" id="UP000002493">
    <property type="component" value="Chromosome 1"/>
</dbReference>
<dbReference type="GO" id="GO:0005737">
    <property type="term" value="C:cytoplasm"/>
    <property type="evidence" value="ECO:0007669"/>
    <property type="project" value="UniProtKB-SubCell"/>
</dbReference>
<dbReference type="GO" id="GO:0005525">
    <property type="term" value="F:GTP binding"/>
    <property type="evidence" value="ECO:0007669"/>
    <property type="project" value="UniProtKB-UniRule"/>
</dbReference>
<dbReference type="GO" id="GO:0003924">
    <property type="term" value="F:GTPase activity"/>
    <property type="evidence" value="ECO:0007669"/>
    <property type="project" value="InterPro"/>
</dbReference>
<dbReference type="GO" id="GO:0097216">
    <property type="term" value="F:guanosine tetraphosphate binding"/>
    <property type="evidence" value="ECO:0007669"/>
    <property type="project" value="UniProtKB-ARBA"/>
</dbReference>
<dbReference type="GO" id="GO:0003746">
    <property type="term" value="F:translation elongation factor activity"/>
    <property type="evidence" value="ECO:0007669"/>
    <property type="project" value="UniProtKB-UniRule"/>
</dbReference>
<dbReference type="GO" id="GO:0032790">
    <property type="term" value="P:ribosome disassembly"/>
    <property type="evidence" value="ECO:0007669"/>
    <property type="project" value="TreeGrafter"/>
</dbReference>
<dbReference type="CDD" id="cd01886">
    <property type="entry name" value="EF-G"/>
    <property type="match status" value="1"/>
</dbReference>
<dbReference type="CDD" id="cd16262">
    <property type="entry name" value="EFG_III"/>
    <property type="match status" value="1"/>
</dbReference>
<dbReference type="CDD" id="cd01434">
    <property type="entry name" value="EFG_mtEFG1_IV"/>
    <property type="match status" value="1"/>
</dbReference>
<dbReference type="CDD" id="cd03713">
    <property type="entry name" value="EFG_mtEFG_C"/>
    <property type="match status" value="1"/>
</dbReference>
<dbReference type="CDD" id="cd04088">
    <property type="entry name" value="EFG_mtEFG_II"/>
    <property type="match status" value="1"/>
</dbReference>
<dbReference type="FunFam" id="2.40.30.10:FF:000006">
    <property type="entry name" value="Elongation factor G"/>
    <property type="match status" value="1"/>
</dbReference>
<dbReference type="FunFam" id="3.30.230.10:FF:000003">
    <property type="entry name" value="Elongation factor G"/>
    <property type="match status" value="1"/>
</dbReference>
<dbReference type="FunFam" id="3.30.70.240:FF:000001">
    <property type="entry name" value="Elongation factor G"/>
    <property type="match status" value="1"/>
</dbReference>
<dbReference type="FunFam" id="3.30.70.870:FF:000001">
    <property type="entry name" value="Elongation factor G"/>
    <property type="match status" value="1"/>
</dbReference>
<dbReference type="FunFam" id="3.40.50.300:FF:000029">
    <property type="entry name" value="Elongation factor G"/>
    <property type="match status" value="1"/>
</dbReference>
<dbReference type="Gene3D" id="3.30.230.10">
    <property type="match status" value="1"/>
</dbReference>
<dbReference type="Gene3D" id="3.30.70.240">
    <property type="match status" value="1"/>
</dbReference>
<dbReference type="Gene3D" id="3.30.70.870">
    <property type="entry name" value="Elongation Factor G (Translational Gtpase), domain 3"/>
    <property type="match status" value="1"/>
</dbReference>
<dbReference type="Gene3D" id="3.40.50.300">
    <property type="entry name" value="P-loop containing nucleotide triphosphate hydrolases"/>
    <property type="match status" value="1"/>
</dbReference>
<dbReference type="Gene3D" id="2.40.30.10">
    <property type="entry name" value="Translation factors"/>
    <property type="match status" value="1"/>
</dbReference>
<dbReference type="HAMAP" id="MF_00054_B">
    <property type="entry name" value="EF_G_EF_2_B"/>
    <property type="match status" value="1"/>
</dbReference>
<dbReference type="InterPro" id="IPR041095">
    <property type="entry name" value="EFG_II"/>
</dbReference>
<dbReference type="InterPro" id="IPR009022">
    <property type="entry name" value="EFG_III"/>
</dbReference>
<dbReference type="InterPro" id="IPR035647">
    <property type="entry name" value="EFG_III/V"/>
</dbReference>
<dbReference type="InterPro" id="IPR047872">
    <property type="entry name" value="EFG_IV"/>
</dbReference>
<dbReference type="InterPro" id="IPR035649">
    <property type="entry name" value="EFG_V"/>
</dbReference>
<dbReference type="InterPro" id="IPR000640">
    <property type="entry name" value="EFG_V-like"/>
</dbReference>
<dbReference type="InterPro" id="IPR004161">
    <property type="entry name" value="EFTu-like_2"/>
</dbReference>
<dbReference type="InterPro" id="IPR031157">
    <property type="entry name" value="G_TR_CS"/>
</dbReference>
<dbReference type="InterPro" id="IPR027417">
    <property type="entry name" value="P-loop_NTPase"/>
</dbReference>
<dbReference type="InterPro" id="IPR020568">
    <property type="entry name" value="Ribosomal_Su5_D2-typ_SF"/>
</dbReference>
<dbReference type="InterPro" id="IPR014721">
    <property type="entry name" value="Ribsml_uS5_D2-typ_fold_subgr"/>
</dbReference>
<dbReference type="InterPro" id="IPR005225">
    <property type="entry name" value="Small_GTP-bd"/>
</dbReference>
<dbReference type="InterPro" id="IPR000795">
    <property type="entry name" value="T_Tr_GTP-bd_dom"/>
</dbReference>
<dbReference type="InterPro" id="IPR009000">
    <property type="entry name" value="Transl_B-barrel_sf"/>
</dbReference>
<dbReference type="InterPro" id="IPR004540">
    <property type="entry name" value="Transl_elong_EFG/EF2"/>
</dbReference>
<dbReference type="InterPro" id="IPR005517">
    <property type="entry name" value="Transl_elong_EFG/EF2_IV"/>
</dbReference>
<dbReference type="NCBIfam" id="TIGR00484">
    <property type="entry name" value="EF-G"/>
    <property type="match status" value="1"/>
</dbReference>
<dbReference type="NCBIfam" id="NF009381">
    <property type="entry name" value="PRK12740.1-5"/>
    <property type="match status" value="1"/>
</dbReference>
<dbReference type="NCBIfam" id="TIGR00231">
    <property type="entry name" value="small_GTP"/>
    <property type="match status" value="1"/>
</dbReference>
<dbReference type="PANTHER" id="PTHR43261:SF1">
    <property type="entry name" value="RIBOSOME-RELEASING FACTOR 2, MITOCHONDRIAL"/>
    <property type="match status" value="1"/>
</dbReference>
<dbReference type="PANTHER" id="PTHR43261">
    <property type="entry name" value="TRANSLATION ELONGATION FACTOR G-RELATED"/>
    <property type="match status" value="1"/>
</dbReference>
<dbReference type="Pfam" id="PF00679">
    <property type="entry name" value="EFG_C"/>
    <property type="match status" value="1"/>
</dbReference>
<dbReference type="Pfam" id="PF14492">
    <property type="entry name" value="EFG_III"/>
    <property type="match status" value="1"/>
</dbReference>
<dbReference type="Pfam" id="PF03764">
    <property type="entry name" value="EFG_IV"/>
    <property type="match status" value="1"/>
</dbReference>
<dbReference type="Pfam" id="PF00009">
    <property type="entry name" value="GTP_EFTU"/>
    <property type="match status" value="1"/>
</dbReference>
<dbReference type="Pfam" id="PF03144">
    <property type="entry name" value="GTP_EFTU_D2"/>
    <property type="match status" value="1"/>
</dbReference>
<dbReference type="PRINTS" id="PR00315">
    <property type="entry name" value="ELONGATNFCT"/>
</dbReference>
<dbReference type="SMART" id="SM00838">
    <property type="entry name" value="EFG_C"/>
    <property type="match status" value="1"/>
</dbReference>
<dbReference type="SMART" id="SM00889">
    <property type="entry name" value="EFG_IV"/>
    <property type="match status" value="1"/>
</dbReference>
<dbReference type="SUPFAM" id="SSF54980">
    <property type="entry name" value="EF-G C-terminal domain-like"/>
    <property type="match status" value="2"/>
</dbReference>
<dbReference type="SUPFAM" id="SSF52540">
    <property type="entry name" value="P-loop containing nucleoside triphosphate hydrolases"/>
    <property type="match status" value="1"/>
</dbReference>
<dbReference type="SUPFAM" id="SSF54211">
    <property type="entry name" value="Ribosomal protein S5 domain 2-like"/>
    <property type="match status" value="1"/>
</dbReference>
<dbReference type="SUPFAM" id="SSF50447">
    <property type="entry name" value="Translation proteins"/>
    <property type="match status" value="1"/>
</dbReference>
<dbReference type="PROSITE" id="PS00301">
    <property type="entry name" value="G_TR_1"/>
    <property type="match status" value="1"/>
</dbReference>
<dbReference type="PROSITE" id="PS51722">
    <property type="entry name" value="G_TR_2"/>
    <property type="match status" value="1"/>
</dbReference>
<proteinExistence type="inferred from homology"/>
<keyword id="KW-0963">Cytoplasm</keyword>
<keyword id="KW-0251">Elongation factor</keyword>
<keyword id="KW-0342">GTP-binding</keyword>
<keyword id="KW-0547">Nucleotide-binding</keyword>
<keyword id="KW-0648">Protein biosynthesis</keyword>